<proteinExistence type="inferred from homology"/>
<dbReference type="EMBL" id="AE016823">
    <property type="protein sequence ID" value="AAS70256.1"/>
    <property type="molecule type" value="Genomic_DNA"/>
</dbReference>
<dbReference type="RefSeq" id="WP_000273947.1">
    <property type="nucleotide sequence ID" value="NC_005823.1"/>
</dbReference>
<dbReference type="SMR" id="Q72RS7"/>
<dbReference type="KEGG" id="lic:LIC_11663"/>
<dbReference type="HOGENOM" id="CLU_028163_1_0_12"/>
<dbReference type="Proteomes" id="UP000007037">
    <property type="component" value="Chromosome I"/>
</dbReference>
<dbReference type="GO" id="GO:0016793">
    <property type="term" value="F:triphosphoric monoester hydrolase activity"/>
    <property type="evidence" value="ECO:0007669"/>
    <property type="project" value="InterPro"/>
</dbReference>
<dbReference type="CDD" id="cd00077">
    <property type="entry name" value="HDc"/>
    <property type="match status" value="1"/>
</dbReference>
<dbReference type="FunFam" id="1.10.3210.10:FF:000024">
    <property type="entry name" value="Deoxyguanosinetriphosphate triphosphohydrolase-like protein"/>
    <property type="match status" value="1"/>
</dbReference>
<dbReference type="Gene3D" id="1.10.3210.10">
    <property type="entry name" value="Hypothetical protein af1432"/>
    <property type="match status" value="1"/>
</dbReference>
<dbReference type="HAMAP" id="MF_01212">
    <property type="entry name" value="dGTPase_type2"/>
    <property type="match status" value="1"/>
</dbReference>
<dbReference type="InterPro" id="IPR006261">
    <property type="entry name" value="dGTPase"/>
</dbReference>
<dbReference type="InterPro" id="IPR051094">
    <property type="entry name" value="Diverse_Catalytic_Enzymes"/>
</dbReference>
<dbReference type="InterPro" id="IPR023023">
    <property type="entry name" value="dNTPase_2"/>
</dbReference>
<dbReference type="InterPro" id="IPR003607">
    <property type="entry name" value="HD/PDEase_dom"/>
</dbReference>
<dbReference type="InterPro" id="IPR006674">
    <property type="entry name" value="HD_domain"/>
</dbReference>
<dbReference type="InterPro" id="IPR026875">
    <property type="entry name" value="PHydrolase_assoc_dom"/>
</dbReference>
<dbReference type="NCBIfam" id="TIGR01353">
    <property type="entry name" value="dGTP_triPase"/>
    <property type="match status" value="1"/>
</dbReference>
<dbReference type="NCBIfam" id="NF002326">
    <property type="entry name" value="PRK01286.1-1"/>
    <property type="match status" value="1"/>
</dbReference>
<dbReference type="PANTHER" id="PTHR35795:SF1">
    <property type="entry name" value="BIS(5'-NUCLEOSYL)-TETRAPHOSPHATASE, SYMMETRICAL"/>
    <property type="match status" value="1"/>
</dbReference>
<dbReference type="PANTHER" id="PTHR35795">
    <property type="entry name" value="SLR1885 PROTEIN"/>
    <property type="match status" value="1"/>
</dbReference>
<dbReference type="Pfam" id="PF01966">
    <property type="entry name" value="HD"/>
    <property type="match status" value="1"/>
</dbReference>
<dbReference type="Pfam" id="PF13286">
    <property type="entry name" value="HD_assoc"/>
    <property type="match status" value="1"/>
</dbReference>
<dbReference type="SMART" id="SM00471">
    <property type="entry name" value="HDc"/>
    <property type="match status" value="1"/>
</dbReference>
<dbReference type="SUPFAM" id="SSF109604">
    <property type="entry name" value="HD-domain/PDEase-like"/>
    <property type="match status" value="1"/>
</dbReference>
<dbReference type="PROSITE" id="PS51831">
    <property type="entry name" value="HD"/>
    <property type="match status" value="1"/>
</dbReference>
<protein>
    <recommendedName>
        <fullName evidence="1">Deoxyguanosinetriphosphate triphosphohydrolase-like protein</fullName>
    </recommendedName>
</protein>
<accession>Q72RS7</accession>
<sequence length="381" mass="44416">MYFSRDDLLQKETETLAPYAISNANNGGRIYEEEEHSYRLPFQRDRDRILHSSAFKRLQYKTQVFIFSVGENYRNRMTHTLEVAGLSRTIASALGLNSLLSESIALAHDLGHTPFGHAGQEILSGLMKDYGGFEHNKQSLRIVTSIEKKYPNFPGLNLCRETLKGLMKHGADYDSSVILLERKENGPSLEGMIADLSDEIAYTNHDIEDGWEMGYLHLGDLLENPFWKEVYEECKDQYKEVGEKILIRTSIRTLTNFLVSDLIQNIAHRLEKKQIKSTEDLALLWKQDFRIASFSKEVDLKFRELKSFLYEKLYRHEDLIRMSDYGKKIIESLFDYFLKHPEKIPDTYKERIEEESLYRVISDYVAGMTDRYAEKIYQSLP</sequence>
<reference key="1">
    <citation type="journal article" date="2004" name="J. Bacteriol.">
        <title>Comparative genomics of two Leptospira interrogans serovars reveals novel insights into physiology and pathogenesis.</title>
        <authorList>
            <person name="Nascimento A.L.T.O."/>
            <person name="Ko A.I."/>
            <person name="Martins E.A.L."/>
            <person name="Monteiro-Vitorello C.B."/>
            <person name="Ho P.L."/>
            <person name="Haake D.A."/>
            <person name="Verjovski-Almeida S."/>
            <person name="Hartskeerl R.A."/>
            <person name="Marques M.V."/>
            <person name="Oliveira M.C."/>
            <person name="Menck C.F.M."/>
            <person name="Leite L.C.C."/>
            <person name="Carrer H."/>
            <person name="Coutinho L.L."/>
            <person name="Degrave W.M."/>
            <person name="Dellagostin O.A."/>
            <person name="El-Dorry H."/>
            <person name="Ferro E.S."/>
            <person name="Ferro M.I.T."/>
            <person name="Furlan L.R."/>
            <person name="Gamberini M."/>
            <person name="Giglioti E.A."/>
            <person name="Goes-Neto A."/>
            <person name="Goldman G.H."/>
            <person name="Goldman M.H.S."/>
            <person name="Harakava R."/>
            <person name="Jeronimo S.M.B."/>
            <person name="Junqueira-de-Azevedo I.L.M."/>
            <person name="Kimura E.T."/>
            <person name="Kuramae E.E."/>
            <person name="Lemos E.G.M."/>
            <person name="Lemos M.V.F."/>
            <person name="Marino C.L."/>
            <person name="Nunes L.R."/>
            <person name="de Oliveira R.C."/>
            <person name="Pereira G.G."/>
            <person name="Reis M.S."/>
            <person name="Schriefer A."/>
            <person name="Siqueira W.J."/>
            <person name="Sommer P."/>
            <person name="Tsai S.M."/>
            <person name="Simpson A.J.G."/>
            <person name="Ferro J.A."/>
            <person name="Camargo L.E.A."/>
            <person name="Kitajima J.P."/>
            <person name="Setubal J.C."/>
            <person name="Van Sluys M.A."/>
        </authorList>
    </citation>
    <scope>NUCLEOTIDE SEQUENCE [LARGE SCALE GENOMIC DNA]</scope>
    <source>
        <strain>Fiocruz L1-130</strain>
    </source>
</reference>
<name>DGTL1_LEPIC</name>
<feature type="chain" id="PRO_0000205305" description="Deoxyguanosinetriphosphate triphosphohydrolase-like protein">
    <location>
        <begin position="1"/>
        <end position="381"/>
    </location>
</feature>
<feature type="domain" description="HD" evidence="2">
    <location>
        <begin position="76"/>
        <end position="203"/>
    </location>
</feature>
<gene>
    <name type="ordered locus">LIC_11663</name>
</gene>
<comment type="similarity">
    <text evidence="1">Belongs to the dGTPase family. Type 2 subfamily.</text>
</comment>
<keyword id="KW-0378">Hydrolase</keyword>
<evidence type="ECO:0000255" key="1">
    <source>
        <dbReference type="HAMAP-Rule" id="MF_01212"/>
    </source>
</evidence>
<evidence type="ECO:0000255" key="2">
    <source>
        <dbReference type="PROSITE-ProRule" id="PRU01175"/>
    </source>
</evidence>
<organism>
    <name type="scientific">Leptospira interrogans serogroup Icterohaemorrhagiae serovar copenhageni (strain Fiocruz L1-130)</name>
    <dbReference type="NCBI Taxonomy" id="267671"/>
    <lineage>
        <taxon>Bacteria</taxon>
        <taxon>Pseudomonadati</taxon>
        <taxon>Spirochaetota</taxon>
        <taxon>Spirochaetia</taxon>
        <taxon>Leptospirales</taxon>
        <taxon>Leptospiraceae</taxon>
        <taxon>Leptospira</taxon>
    </lineage>
</organism>